<name>PPI1_STAS1</name>
<keyword id="KW-0413">Isomerase</keyword>
<keyword id="KW-1185">Reference proteome</keyword>
<keyword id="KW-0697">Rotamase</keyword>
<dbReference type="EC" id="5.2.1.8"/>
<dbReference type="EMBL" id="AP008934">
    <property type="protein sequence ID" value="BAE18966.1"/>
    <property type="molecule type" value="Genomic_DNA"/>
</dbReference>
<dbReference type="RefSeq" id="WP_002483798.1">
    <property type="nucleotide sequence ID" value="NZ_MTGA01000039.1"/>
</dbReference>
<dbReference type="SMR" id="Q49W93"/>
<dbReference type="KEGG" id="ssp:SSP1821"/>
<dbReference type="eggNOG" id="COG0652">
    <property type="taxonomic scope" value="Bacteria"/>
</dbReference>
<dbReference type="HOGENOM" id="CLU_012062_16_0_9"/>
<dbReference type="OrthoDB" id="9807797at2"/>
<dbReference type="Proteomes" id="UP000006371">
    <property type="component" value="Chromosome"/>
</dbReference>
<dbReference type="GO" id="GO:0003755">
    <property type="term" value="F:peptidyl-prolyl cis-trans isomerase activity"/>
    <property type="evidence" value="ECO:0007669"/>
    <property type="project" value="UniProtKB-KW"/>
</dbReference>
<dbReference type="GO" id="GO:0006457">
    <property type="term" value="P:protein folding"/>
    <property type="evidence" value="ECO:0007669"/>
    <property type="project" value="InterPro"/>
</dbReference>
<dbReference type="Gene3D" id="2.40.100.10">
    <property type="entry name" value="Cyclophilin-like"/>
    <property type="match status" value="1"/>
</dbReference>
<dbReference type="InterPro" id="IPR029000">
    <property type="entry name" value="Cyclophilin-like_dom_sf"/>
</dbReference>
<dbReference type="InterPro" id="IPR024936">
    <property type="entry name" value="Cyclophilin-type_PPIase"/>
</dbReference>
<dbReference type="InterPro" id="IPR020892">
    <property type="entry name" value="Cyclophilin-type_PPIase_CS"/>
</dbReference>
<dbReference type="InterPro" id="IPR002130">
    <property type="entry name" value="Cyclophilin-type_PPIase_dom"/>
</dbReference>
<dbReference type="InterPro" id="IPR044666">
    <property type="entry name" value="Cyclophilin_A-like"/>
</dbReference>
<dbReference type="PANTHER" id="PTHR45625">
    <property type="entry name" value="PEPTIDYL-PROLYL CIS-TRANS ISOMERASE-RELATED"/>
    <property type="match status" value="1"/>
</dbReference>
<dbReference type="PANTHER" id="PTHR45625:SF4">
    <property type="entry name" value="PEPTIDYLPROLYL ISOMERASE DOMAIN AND WD REPEAT-CONTAINING PROTEIN 1"/>
    <property type="match status" value="1"/>
</dbReference>
<dbReference type="Pfam" id="PF00160">
    <property type="entry name" value="Pro_isomerase"/>
    <property type="match status" value="1"/>
</dbReference>
<dbReference type="PIRSF" id="PIRSF001467">
    <property type="entry name" value="Peptidylpro_ismrse"/>
    <property type="match status" value="1"/>
</dbReference>
<dbReference type="PRINTS" id="PR00153">
    <property type="entry name" value="CSAPPISMRASE"/>
</dbReference>
<dbReference type="SUPFAM" id="SSF50891">
    <property type="entry name" value="Cyclophilin-like"/>
    <property type="match status" value="1"/>
</dbReference>
<dbReference type="PROSITE" id="PS00170">
    <property type="entry name" value="CSA_PPIASE_1"/>
    <property type="match status" value="1"/>
</dbReference>
<dbReference type="PROSITE" id="PS50072">
    <property type="entry name" value="CSA_PPIASE_2"/>
    <property type="match status" value="1"/>
</dbReference>
<organism>
    <name type="scientific">Staphylococcus saprophyticus subsp. saprophyticus (strain ATCC 15305 / DSM 20229 / NCIMB 8711 / NCTC 7292 / S-41)</name>
    <dbReference type="NCBI Taxonomy" id="342451"/>
    <lineage>
        <taxon>Bacteria</taxon>
        <taxon>Bacillati</taxon>
        <taxon>Bacillota</taxon>
        <taxon>Bacilli</taxon>
        <taxon>Bacillales</taxon>
        <taxon>Staphylococcaceae</taxon>
        <taxon>Staphylococcus</taxon>
    </lineage>
</organism>
<feature type="chain" id="PRO_0000299091" description="Putative peptidyl-prolyl cis-trans isomerase">
    <location>
        <begin position="1"/>
        <end position="197"/>
    </location>
</feature>
<feature type="domain" description="PPIase cyclophilin-type" evidence="2">
    <location>
        <begin position="14"/>
        <end position="195"/>
    </location>
</feature>
<sequence length="197" mass="21683">MTNYPQLNTEINGNEIKLIMHTNKGDMTFKLLPDVAPKTVENFVTHAKNGYYNGVTFHRVINDFMVQGGDPTATGMGGESIYGEPFEDEFSKEAFNIYGALSMANAGPHTNGSQFFIVQMNEVPESMLSQLADGGWPEPIVKAYAETGGTPWLDQKHTVFGQLIEGKDTLEDIANTKVGPQDKPLHDITIDSIEIVE</sequence>
<accession>Q49W93</accession>
<reference key="1">
    <citation type="journal article" date="2005" name="Proc. Natl. Acad. Sci. U.S.A.">
        <title>Whole genome sequence of Staphylococcus saprophyticus reveals the pathogenesis of uncomplicated urinary tract infection.</title>
        <authorList>
            <person name="Kuroda M."/>
            <person name="Yamashita A."/>
            <person name="Hirakawa H."/>
            <person name="Kumano M."/>
            <person name="Morikawa K."/>
            <person name="Higashide M."/>
            <person name="Maruyama A."/>
            <person name="Inose Y."/>
            <person name="Matoba K."/>
            <person name="Toh H."/>
            <person name="Kuhara S."/>
            <person name="Hattori M."/>
            <person name="Ohta T."/>
        </authorList>
    </citation>
    <scope>NUCLEOTIDE SEQUENCE [LARGE SCALE GENOMIC DNA]</scope>
    <source>
        <strain>ATCC 15305 / DSM 20229 / NCIMB 8711 / NCTC 7292 / S-41</strain>
    </source>
</reference>
<gene>
    <name type="ordered locus">SSP1821</name>
</gene>
<protein>
    <recommendedName>
        <fullName>Putative peptidyl-prolyl cis-trans isomerase</fullName>
        <shortName>PPIase</shortName>
        <ecNumber>5.2.1.8</ecNumber>
    </recommendedName>
    <alternativeName>
        <fullName>Rotamase</fullName>
    </alternativeName>
</protein>
<comment type="function">
    <text evidence="1">PPIases accelerate the folding of proteins. It catalyzes the cis-trans isomerization of proline imidic peptide bonds in oligopeptides (By similarity).</text>
</comment>
<comment type="catalytic activity">
    <reaction>
        <text>[protein]-peptidylproline (omega=180) = [protein]-peptidylproline (omega=0)</text>
        <dbReference type="Rhea" id="RHEA:16237"/>
        <dbReference type="Rhea" id="RHEA-COMP:10747"/>
        <dbReference type="Rhea" id="RHEA-COMP:10748"/>
        <dbReference type="ChEBI" id="CHEBI:83833"/>
        <dbReference type="ChEBI" id="CHEBI:83834"/>
        <dbReference type="EC" id="5.2.1.8"/>
    </reaction>
</comment>
<comment type="similarity">
    <text evidence="3">Belongs to the cyclophilin-type PPIase family.</text>
</comment>
<proteinExistence type="inferred from homology"/>
<evidence type="ECO:0000250" key="1"/>
<evidence type="ECO:0000255" key="2">
    <source>
        <dbReference type="PROSITE-ProRule" id="PRU00156"/>
    </source>
</evidence>
<evidence type="ECO:0000305" key="3"/>